<organism>
    <name type="scientific">Archaeoglobus fulgidus (strain ATCC 49558 / DSM 4304 / JCM 9628 / NBRC 100126 / VC-16)</name>
    <dbReference type="NCBI Taxonomy" id="224325"/>
    <lineage>
        <taxon>Archaea</taxon>
        <taxon>Methanobacteriati</taxon>
        <taxon>Methanobacteriota</taxon>
        <taxon>Archaeoglobi</taxon>
        <taxon>Archaeoglobales</taxon>
        <taxon>Archaeoglobaceae</taxon>
        <taxon>Archaeoglobus</taxon>
    </lineage>
</organism>
<reference key="1">
    <citation type="journal article" date="1997" name="Nature">
        <title>The complete genome sequence of the hyperthermophilic, sulphate-reducing archaeon Archaeoglobus fulgidus.</title>
        <authorList>
            <person name="Klenk H.-P."/>
            <person name="Clayton R.A."/>
            <person name="Tomb J.-F."/>
            <person name="White O."/>
            <person name="Nelson K.E."/>
            <person name="Ketchum K.A."/>
            <person name="Dodson R.J."/>
            <person name="Gwinn M.L."/>
            <person name="Hickey E.K."/>
            <person name="Peterson J.D."/>
            <person name="Richardson D.L."/>
            <person name="Kerlavage A.R."/>
            <person name="Graham D.E."/>
            <person name="Kyrpides N.C."/>
            <person name="Fleischmann R.D."/>
            <person name="Quackenbush J."/>
            <person name="Lee N.H."/>
            <person name="Sutton G.G."/>
            <person name="Gill S.R."/>
            <person name="Kirkness E.F."/>
            <person name="Dougherty B.A."/>
            <person name="McKenney K."/>
            <person name="Adams M.D."/>
            <person name="Loftus B.J."/>
            <person name="Peterson S.N."/>
            <person name="Reich C.I."/>
            <person name="McNeil L.K."/>
            <person name="Badger J.H."/>
            <person name="Glodek A."/>
            <person name="Zhou L."/>
            <person name="Overbeek R."/>
            <person name="Gocayne J.D."/>
            <person name="Weidman J.F."/>
            <person name="McDonald L.A."/>
            <person name="Utterback T.R."/>
            <person name="Cotton M.D."/>
            <person name="Spriggs T."/>
            <person name="Artiach P."/>
            <person name="Kaine B.P."/>
            <person name="Sykes S.M."/>
            <person name="Sadow P.W."/>
            <person name="D'Andrea K.P."/>
            <person name="Bowman C."/>
            <person name="Fujii C."/>
            <person name="Garland S.A."/>
            <person name="Mason T.M."/>
            <person name="Olsen G.J."/>
            <person name="Fraser C.M."/>
            <person name="Smith H.O."/>
            <person name="Woese C.R."/>
            <person name="Venter J.C."/>
        </authorList>
    </citation>
    <scope>NUCLEOTIDE SEQUENCE [LARGE SCALE GENOMIC DNA]</scope>
    <source>
        <strain>ATCC 49558 / DSM 4304 / JCM 9628 / NBRC 100126 / VC-16</strain>
    </source>
</reference>
<feature type="chain" id="PRO_0000128001" description="Uncharacterized protein AF_1447">
    <location>
        <begin position="1"/>
        <end position="81"/>
    </location>
</feature>
<name>Y1447_ARCFU</name>
<dbReference type="EMBL" id="AE000782">
    <property type="protein sequence ID" value="AAB89802.1"/>
    <property type="molecule type" value="Genomic_DNA"/>
</dbReference>
<dbReference type="PIR" id="F69430">
    <property type="entry name" value="F69430"/>
</dbReference>
<dbReference type="RefSeq" id="WP_010878944.1">
    <property type="nucleotide sequence ID" value="NC_000917.1"/>
</dbReference>
<dbReference type="STRING" id="224325.AF_1447"/>
<dbReference type="PaxDb" id="224325-AF_1447"/>
<dbReference type="EnsemblBacteria" id="AAB89802">
    <property type="protein sequence ID" value="AAB89802"/>
    <property type="gene ID" value="AF_1447"/>
</dbReference>
<dbReference type="KEGG" id="afu:AF_1447"/>
<dbReference type="HOGENOM" id="CLU_2565514_0_0_2"/>
<dbReference type="OrthoDB" id="98570at2157"/>
<dbReference type="Proteomes" id="UP000002199">
    <property type="component" value="Chromosome"/>
</dbReference>
<gene>
    <name type="ordered locus">AF_1447</name>
</gene>
<protein>
    <recommendedName>
        <fullName>Uncharacterized protein AF_1447</fullName>
    </recommendedName>
</protein>
<sequence length="81" mass="9548">MKKRFFIFLTPDGMTYSSCEGIYPDVDNLQVLGWAEGLTKEDAFEEFLRVNRWVLDTNFKEVICVEARTRIHEGKLFLLKK</sequence>
<proteinExistence type="predicted"/>
<keyword id="KW-1185">Reference proteome</keyword>
<accession>O28825</accession>